<gene>
    <name type="primary">yiaL</name>
    <name type="ordered locus">b3576</name>
    <name type="ordered locus">JW3548</name>
</gene>
<dbReference type="EMBL" id="U00039">
    <property type="protein sequence ID" value="AAB18553.1"/>
    <property type="molecule type" value="Genomic_DNA"/>
</dbReference>
<dbReference type="EMBL" id="U00096">
    <property type="protein sequence ID" value="AAC76600.1"/>
    <property type="molecule type" value="Genomic_DNA"/>
</dbReference>
<dbReference type="EMBL" id="AP009048">
    <property type="protein sequence ID" value="BAE77717.1"/>
    <property type="molecule type" value="Genomic_DNA"/>
</dbReference>
<dbReference type="PIR" id="S47797">
    <property type="entry name" value="S47797"/>
</dbReference>
<dbReference type="RefSeq" id="NP_418033.1">
    <property type="nucleotide sequence ID" value="NC_000913.3"/>
</dbReference>
<dbReference type="RefSeq" id="WP_000576079.1">
    <property type="nucleotide sequence ID" value="NZ_SSZK01000041.1"/>
</dbReference>
<dbReference type="SMR" id="P37673"/>
<dbReference type="BioGRID" id="4262547">
    <property type="interactions" value="13"/>
</dbReference>
<dbReference type="FunCoup" id="P37673">
    <property type="interactions" value="151"/>
</dbReference>
<dbReference type="STRING" id="511145.b3576"/>
<dbReference type="PaxDb" id="511145-b3576"/>
<dbReference type="EnsemblBacteria" id="AAC76600">
    <property type="protein sequence ID" value="AAC76600"/>
    <property type="gene ID" value="b3576"/>
</dbReference>
<dbReference type="GeneID" id="948094"/>
<dbReference type="KEGG" id="ecj:JW3548"/>
<dbReference type="KEGG" id="eco:b3576"/>
<dbReference type="KEGG" id="ecoc:C3026_19390"/>
<dbReference type="PATRIC" id="fig|511145.12.peg.3691"/>
<dbReference type="EchoBASE" id="EB2188"/>
<dbReference type="eggNOG" id="COG2731">
    <property type="taxonomic scope" value="Bacteria"/>
</dbReference>
<dbReference type="HOGENOM" id="CLU_107139_3_3_6"/>
<dbReference type="InParanoid" id="P37673"/>
<dbReference type="OMA" id="ISQPNPC"/>
<dbReference type="OrthoDB" id="6196468at2"/>
<dbReference type="PhylomeDB" id="P37673"/>
<dbReference type="BioCyc" id="EcoCyc:EG12280-MONOMER"/>
<dbReference type="PRO" id="PR:P37673"/>
<dbReference type="Proteomes" id="UP000000625">
    <property type="component" value="Chromosome"/>
</dbReference>
<dbReference type="GO" id="GO:0005829">
    <property type="term" value="C:cytosol"/>
    <property type="evidence" value="ECO:0000318"/>
    <property type="project" value="GO_Central"/>
</dbReference>
<dbReference type="GO" id="GO:0009314">
    <property type="term" value="P:response to radiation"/>
    <property type="evidence" value="ECO:0000315"/>
    <property type="project" value="EcoCyc"/>
</dbReference>
<dbReference type="FunFam" id="2.60.120.370:FF:000003">
    <property type="entry name" value="Uncharacterized protein, YhcH/YjgK/YiaL family"/>
    <property type="match status" value="1"/>
</dbReference>
<dbReference type="Gene3D" id="2.60.120.370">
    <property type="entry name" value="YhcH/YjgK/YiaL"/>
    <property type="match status" value="1"/>
</dbReference>
<dbReference type="InterPro" id="IPR004375">
    <property type="entry name" value="NanQ/TabA/YiaL"/>
</dbReference>
<dbReference type="InterPro" id="IPR037012">
    <property type="entry name" value="NanQ/TabA/YiaL_sf"/>
</dbReference>
<dbReference type="NCBIfam" id="TIGR00022">
    <property type="entry name" value="YhcH/YjgK/YiaL family protein"/>
    <property type="match status" value="1"/>
</dbReference>
<dbReference type="PANTHER" id="PTHR34986">
    <property type="entry name" value="EVOLVED BETA-GALACTOSIDASE SUBUNIT BETA"/>
    <property type="match status" value="1"/>
</dbReference>
<dbReference type="PANTHER" id="PTHR34986:SF1">
    <property type="entry name" value="PROTEIN YIAL"/>
    <property type="match status" value="1"/>
</dbReference>
<dbReference type="Pfam" id="PF04074">
    <property type="entry name" value="DUF386"/>
    <property type="match status" value="1"/>
</dbReference>
<dbReference type="SUPFAM" id="SSF51197">
    <property type="entry name" value="Clavaminate synthase-like"/>
    <property type="match status" value="1"/>
</dbReference>
<sequence length="155" mass="17549">MIFGHIAQPNPCRLPAAIEKALDFLRATDFNALEPGVVEIDGKNIYTQIIDLTTREAVVNRPEVHRRYIDIQFLAWGEEKIGIAIDTGNNKVSESLLEQRNIIFYHDSEHESFIEMIPGSYAIFFPQDVHRPGCIMQTASEIRKIVVKVALTALN</sequence>
<evidence type="ECO:0000305" key="1"/>
<reference key="1">
    <citation type="journal article" date="1994" name="Nucleic Acids Res.">
        <title>Analysis of the Escherichia coli genome. V. DNA sequence of the region from 76.0 to 81.5 minutes.</title>
        <authorList>
            <person name="Sofia H.J."/>
            <person name="Burland V."/>
            <person name="Daniels D.L."/>
            <person name="Plunkett G. III"/>
            <person name="Blattner F.R."/>
        </authorList>
    </citation>
    <scope>NUCLEOTIDE SEQUENCE [LARGE SCALE GENOMIC DNA]</scope>
    <source>
        <strain>K12 / MG1655 / ATCC 47076</strain>
    </source>
</reference>
<reference key="2">
    <citation type="journal article" date="1997" name="Science">
        <title>The complete genome sequence of Escherichia coli K-12.</title>
        <authorList>
            <person name="Blattner F.R."/>
            <person name="Plunkett G. III"/>
            <person name="Bloch C.A."/>
            <person name="Perna N.T."/>
            <person name="Burland V."/>
            <person name="Riley M."/>
            <person name="Collado-Vides J."/>
            <person name="Glasner J.D."/>
            <person name="Rode C.K."/>
            <person name="Mayhew G.F."/>
            <person name="Gregor J."/>
            <person name="Davis N.W."/>
            <person name="Kirkpatrick H.A."/>
            <person name="Goeden M.A."/>
            <person name="Rose D.J."/>
            <person name="Mau B."/>
            <person name="Shao Y."/>
        </authorList>
    </citation>
    <scope>NUCLEOTIDE SEQUENCE [LARGE SCALE GENOMIC DNA]</scope>
    <source>
        <strain>K12 / MG1655 / ATCC 47076</strain>
    </source>
</reference>
<reference key="3">
    <citation type="journal article" date="2006" name="Mol. Syst. Biol.">
        <title>Highly accurate genome sequences of Escherichia coli K-12 strains MG1655 and W3110.</title>
        <authorList>
            <person name="Hayashi K."/>
            <person name="Morooka N."/>
            <person name="Yamamoto Y."/>
            <person name="Fujita K."/>
            <person name="Isono K."/>
            <person name="Choi S."/>
            <person name="Ohtsubo E."/>
            <person name="Baba T."/>
            <person name="Wanner B.L."/>
            <person name="Mori H."/>
            <person name="Horiuchi T."/>
        </authorList>
    </citation>
    <scope>NUCLEOTIDE SEQUENCE [LARGE SCALE GENOMIC DNA]</scope>
    <source>
        <strain>K12 / W3110 / ATCC 27325 / DSM 5911</strain>
    </source>
</reference>
<proteinExistence type="inferred from homology"/>
<protein>
    <recommendedName>
        <fullName>Protein YiaL</fullName>
    </recommendedName>
</protein>
<feature type="chain" id="PRO_0000169594" description="Protein YiaL">
    <location>
        <begin position="1"/>
        <end position="155"/>
    </location>
</feature>
<keyword id="KW-1185">Reference proteome</keyword>
<organism>
    <name type="scientific">Escherichia coli (strain K12)</name>
    <dbReference type="NCBI Taxonomy" id="83333"/>
    <lineage>
        <taxon>Bacteria</taxon>
        <taxon>Pseudomonadati</taxon>
        <taxon>Pseudomonadota</taxon>
        <taxon>Gammaproteobacteria</taxon>
        <taxon>Enterobacterales</taxon>
        <taxon>Enterobacteriaceae</taxon>
        <taxon>Escherichia</taxon>
    </lineage>
</organism>
<comment type="similarity">
    <text evidence="1">Belongs to the TabA/YiaL family.</text>
</comment>
<name>YIAL_ECOLI</name>
<accession>P37673</accession>
<accession>Q2M7N9</accession>